<protein>
    <recommendedName>
        <fullName>FXYD domain-containing ion transport regulator 3</fullName>
    </recommendedName>
    <alternativeName>
        <fullName>Chloride conductance inducer protein Mat-8</fullName>
    </alternativeName>
    <alternativeName>
        <fullName>Mammary tumor 8 kDa protein</fullName>
    </alternativeName>
    <alternativeName>
        <fullName evidence="5">Sodium/potassium-transporting ATPase subunit FXYD3</fullName>
    </alternativeName>
</protein>
<feature type="signal peptide" evidence="1">
    <location>
        <begin position="1"/>
        <end position="17"/>
    </location>
</feature>
<feature type="chain" id="PRO_0000010364" description="FXYD domain-containing ion transport regulator 3">
    <location>
        <begin position="18"/>
        <end position="88"/>
    </location>
</feature>
<feature type="topological domain" description="Extracellular" evidence="3">
    <location>
        <begin position="18"/>
        <end position="38"/>
    </location>
</feature>
<feature type="transmembrane region" description="Helical" evidence="3">
    <location>
        <begin position="39"/>
        <end position="59"/>
    </location>
</feature>
<feature type="topological domain" description="Cytoplasmic" evidence="3">
    <location>
        <begin position="60"/>
        <end position="88"/>
    </location>
</feature>
<feature type="region of interest" description="Disordered" evidence="4">
    <location>
        <begin position="66"/>
        <end position="88"/>
    </location>
</feature>
<keyword id="KW-1003">Cell membrane</keyword>
<keyword id="KW-0318">Glutathionylation</keyword>
<keyword id="KW-0406">Ion transport</keyword>
<keyword id="KW-0472">Membrane</keyword>
<keyword id="KW-0630">Potassium</keyword>
<keyword id="KW-0633">Potassium transport</keyword>
<keyword id="KW-1185">Reference proteome</keyword>
<keyword id="KW-0732">Signal</keyword>
<keyword id="KW-0915">Sodium</keyword>
<keyword id="KW-0739">Sodium transport</keyword>
<keyword id="KW-0740">Sodium/potassium transport</keyword>
<keyword id="KW-0812">Transmembrane</keyword>
<keyword id="KW-1133">Transmembrane helix</keyword>
<keyword id="KW-0813">Transport</keyword>
<reference key="1">
    <citation type="journal article" date="1998" name="Cell Struct. Funct.">
        <title>Structures of P-type transporting ATPases and chromosomal locations of their genes.</title>
        <authorList>
            <person name="Maeda M."/>
            <person name="Hamano K."/>
            <person name="Hirano Y."/>
            <person name="Suzuki M."/>
            <person name="Takahashi E."/>
            <person name="Terada T."/>
            <person name="Futai M."/>
            <person name="Sato R."/>
        </authorList>
    </citation>
    <scope>NUCLEOTIDE SEQUENCE [MRNA]</scope>
    <source>
        <tissue>Gastric mucosa</tissue>
    </source>
</reference>
<comment type="function">
    <text evidence="1">Associates with and regulates the activity of the sodium/potassium-transporting ATPase (NKA) which transports Na(+) out of the cell and K(+) into the cell. Reduces glutathionylation of the NKA beta-1 subunit ATP1B1, thus reversing glutathionylation-mediated inhibition of ATP1B1. Induces a hyperpolarization-activated chloride current when expressed in Xenopus oocytes.</text>
</comment>
<comment type="subunit">
    <text evidence="1 2">Regulatory subunit of the sodium/potassium-transporting ATPase which is composed of a catalytic alpha subunit, a non-catalytic beta subunit and an additional regulatory subunit. Interacts with catalytic alpha subunit ATP1A1. Also interacts with non-catalytic beta subunit ATP1B1. Interacts with the alpha1-beta1, alpha2-beta1 and alpha3-beta1 NKA isozymes.</text>
</comment>
<comment type="subcellular location">
    <subcellularLocation>
        <location evidence="5">Cell membrane</location>
        <topology evidence="3">Single-pass type I membrane protein</topology>
    </subcellularLocation>
</comment>
<comment type="PTM">
    <text evidence="1">Glutathionylated.</text>
</comment>
<comment type="similarity">
    <text evidence="5">Belongs to the FXYD family.</text>
</comment>
<sequence>MHEVALSVLILLAGLSALDANDPEDKNSPFYYDWHSLRVGGLICAGTPCALGIIILLSGKCKCKFSQKPSHRPGDAPPLITPGSAHDC</sequence>
<proteinExistence type="inferred from homology"/>
<organism>
    <name type="scientific">Sus scrofa</name>
    <name type="common">Pig</name>
    <dbReference type="NCBI Taxonomy" id="9823"/>
    <lineage>
        <taxon>Eukaryota</taxon>
        <taxon>Metazoa</taxon>
        <taxon>Chordata</taxon>
        <taxon>Craniata</taxon>
        <taxon>Vertebrata</taxon>
        <taxon>Euteleostomi</taxon>
        <taxon>Mammalia</taxon>
        <taxon>Eutheria</taxon>
        <taxon>Laurasiatheria</taxon>
        <taxon>Artiodactyla</taxon>
        <taxon>Suina</taxon>
        <taxon>Suidae</taxon>
        <taxon>Sus</taxon>
    </lineage>
</organism>
<dbReference type="EMBL" id="AB015759">
    <property type="protein sequence ID" value="BAA35078.1"/>
    <property type="molecule type" value="mRNA"/>
</dbReference>
<dbReference type="RefSeq" id="NP_999373.1">
    <property type="nucleotide sequence ID" value="NM_214208.2"/>
</dbReference>
<dbReference type="SMR" id="O97797"/>
<dbReference type="FunCoup" id="O97797">
    <property type="interactions" value="250"/>
</dbReference>
<dbReference type="PaxDb" id="9823-ENSSSCP00000023061"/>
<dbReference type="GeneID" id="397413"/>
<dbReference type="KEGG" id="ssc:397413"/>
<dbReference type="CTD" id="5349"/>
<dbReference type="eggNOG" id="ENOG502S9Z9">
    <property type="taxonomic scope" value="Eukaryota"/>
</dbReference>
<dbReference type="InParanoid" id="O97797"/>
<dbReference type="OrthoDB" id="9888529at2759"/>
<dbReference type="Proteomes" id="UP000008227">
    <property type="component" value="Unplaced"/>
</dbReference>
<dbReference type="Proteomes" id="UP000314985">
    <property type="component" value="Unplaced"/>
</dbReference>
<dbReference type="Proteomes" id="UP000694570">
    <property type="component" value="Unplaced"/>
</dbReference>
<dbReference type="Proteomes" id="UP000694571">
    <property type="component" value="Unplaced"/>
</dbReference>
<dbReference type="Proteomes" id="UP000694720">
    <property type="component" value="Unplaced"/>
</dbReference>
<dbReference type="Proteomes" id="UP000694722">
    <property type="component" value="Unplaced"/>
</dbReference>
<dbReference type="Proteomes" id="UP000694723">
    <property type="component" value="Unplaced"/>
</dbReference>
<dbReference type="Proteomes" id="UP000694724">
    <property type="component" value="Unplaced"/>
</dbReference>
<dbReference type="Proteomes" id="UP000694725">
    <property type="component" value="Unplaced"/>
</dbReference>
<dbReference type="Proteomes" id="UP000694726">
    <property type="component" value="Unplaced"/>
</dbReference>
<dbReference type="Proteomes" id="UP000694727">
    <property type="component" value="Unplaced"/>
</dbReference>
<dbReference type="Proteomes" id="UP000694728">
    <property type="component" value="Unplaced"/>
</dbReference>
<dbReference type="GO" id="GO:0005886">
    <property type="term" value="C:plasma membrane"/>
    <property type="evidence" value="ECO:0007669"/>
    <property type="project" value="UniProtKB-SubCell"/>
</dbReference>
<dbReference type="GO" id="GO:0017080">
    <property type="term" value="F:sodium channel regulator activity"/>
    <property type="evidence" value="ECO:0000318"/>
    <property type="project" value="GO_Central"/>
</dbReference>
<dbReference type="GO" id="GO:1903278">
    <property type="term" value="P:positive regulation of sodium ion export across plasma membrane"/>
    <property type="evidence" value="ECO:0000318"/>
    <property type="project" value="GO_Central"/>
</dbReference>
<dbReference type="GO" id="GO:0006813">
    <property type="term" value="P:potassium ion transport"/>
    <property type="evidence" value="ECO:0007669"/>
    <property type="project" value="UniProtKB-KW"/>
</dbReference>
<dbReference type="GO" id="GO:0006814">
    <property type="term" value="P:sodium ion transport"/>
    <property type="evidence" value="ECO:0007669"/>
    <property type="project" value="UniProtKB-KW"/>
</dbReference>
<dbReference type="CDD" id="cd20328">
    <property type="entry name" value="FXYD3-like"/>
    <property type="match status" value="1"/>
</dbReference>
<dbReference type="FunFam" id="1.20.5.780:FF:000006">
    <property type="entry name" value="FXYD domain-containing ion transport regulator"/>
    <property type="match status" value="1"/>
</dbReference>
<dbReference type="Gene3D" id="1.20.5.780">
    <property type="entry name" value="Single helix bin"/>
    <property type="match status" value="1"/>
</dbReference>
<dbReference type="InterPro" id="IPR047297">
    <property type="entry name" value="FXYD_motif"/>
</dbReference>
<dbReference type="InterPro" id="IPR000272">
    <property type="entry name" value="Ion-transport_regulator_FXYD"/>
</dbReference>
<dbReference type="PANTHER" id="PTHR14132:SF11">
    <property type="entry name" value="FXYD DOMAIN-CONTAINING ION TRANSPORT REGULATOR 3"/>
    <property type="match status" value="1"/>
</dbReference>
<dbReference type="PANTHER" id="PTHR14132">
    <property type="entry name" value="SODIUM/POTASSIUM-TRANSPORTING ATPASE SUBUNIT GAMMA"/>
    <property type="match status" value="1"/>
</dbReference>
<dbReference type="Pfam" id="PF02038">
    <property type="entry name" value="ATP1G1_PLM_MAT8"/>
    <property type="match status" value="1"/>
</dbReference>
<dbReference type="PROSITE" id="PS01310">
    <property type="entry name" value="FXYD"/>
    <property type="match status" value="1"/>
</dbReference>
<accession>O97797</accession>
<name>FXYD3_PIG</name>
<evidence type="ECO:0000250" key="1">
    <source>
        <dbReference type="UniProtKB" id="Q14802"/>
    </source>
</evidence>
<evidence type="ECO:0000250" key="2">
    <source>
        <dbReference type="UniProtKB" id="Q61835"/>
    </source>
</evidence>
<evidence type="ECO:0000255" key="3"/>
<evidence type="ECO:0000256" key="4">
    <source>
        <dbReference type="SAM" id="MobiDB-lite"/>
    </source>
</evidence>
<evidence type="ECO:0000305" key="5"/>
<gene>
    <name type="primary">FXYD3</name>
    <name type="synonym">MAT8</name>
</gene>